<reference key="1">
    <citation type="journal article" date="1991" name="J. Biol. Chem.">
        <title>DNA sequence of Mirabilis antiviral protein (MAP), a ribosome-inactivating protein with an antiviral property, from mirabilis jalapa L. and its expression in Escherichia coli.</title>
        <authorList>
            <person name="Kataoka J."/>
            <person name="Habuka N."/>
            <person name="Furuno M."/>
            <person name="Miyano M."/>
            <person name="Takanami Y."/>
            <person name="Koiwai A."/>
        </authorList>
    </citation>
    <scope>NUCLEOTIDE SEQUENCE [MRNA]</scope>
</reference>
<reference key="2">
    <citation type="journal article" date="1993" name="Nucleic Acids Res.">
        <title>A genomic gene for MAP, a ribosome-inactivating protein from Mirabilis jalapa, contains an intron.</title>
        <authorList>
            <person name="Kataoka J."/>
            <person name="Miyano M."/>
            <person name="Habuka N."/>
            <person name="Masuta C."/>
            <person name="Koiwai A."/>
        </authorList>
    </citation>
    <scope>NUCLEOTIDE SEQUENCE [GENOMIC DNA]</scope>
</reference>
<reference key="3">
    <citation type="journal article" date="1989" name="J. Biol. Chem.">
        <title>Amino acid sequence of Mirabilis antiviral protein, total synthesis of its gene and expression in Escherichia coli.</title>
        <authorList>
            <person name="Habuka N."/>
            <person name="Murakami Y."/>
            <person name="Noma M."/>
            <person name="Kudo T."/>
            <person name="Horikoshi K."/>
        </authorList>
    </citation>
    <scope>PROTEIN SEQUENCE OF 29-278</scope>
</reference>
<reference key="4">
    <citation type="journal article" date="2001" name="J. Mass Spectrom.">
        <title>Reliable sequence determination of ribosome-inactivating proteins by combining electrospray mass spectrometry and Edman degradation.</title>
        <authorList>
            <person name="Di Maro A."/>
            <person name="Ferranti P."/>
            <person name="Mastronicola M."/>
            <person name="Polito L."/>
            <person name="Bolognesi A."/>
            <person name="Stirpe F."/>
            <person name="Malorni A."/>
            <person name="Parente A."/>
        </authorList>
    </citation>
    <scope>PROTEIN SEQUENCE OF 29-278</scope>
    <scope>MASS SPECTROMETRY</scope>
    <scope>DISULFIDE BOND</scope>
    <source>
        <tissue>Seed</tissue>
    </source>
</reference>
<keyword id="KW-0051">Antiviral defense</keyword>
<keyword id="KW-0903">Direct protein sequencing</keyword>
<keyword id="KW-1015">Disulfide bond</keyword>
<keyword id="KW-0378">Hydrolase</keyword>
<keyword id="KW-0611">Plant defense</keyword>
<keyword id="KW-0652">Protein synthesis inhibitor</keyword>
<keyword id="KW-0732">Signal</keyword>
<keyword id="KW-0800">Toxin</keyword>
<organism>
    <name type="scientific">Mirabilis jalapa</name>
    <name type="common">Garden four-o'clock</name>
    <dbReference type="NCBI Taxonomy" id="3538"/>
    <lineage>
        <taxon>Eukaryota</taxon>
        <taxon>Viridiplantae</taxon>
        <taxon>Streptophyta</taxon>
        <taxon>Embryophyta</taxon>
        <taxon>Tracheophyta</taxon>
        <taxon>Spermatophyta</taxon>
        <taxon>Magnoliopsida</taxon>
        <taxon>eudicotyledons</taxon>
        <taxon>Gunneridae</taxon>
        <taxon>Pentapetalae</taxon>
        <taxon>Caryophyllales</taxon>
        <taxon>Nyctaginaceae</taxon>
        <taxon>Mirabilis</taxon>
    </lineage>
</organism>
<dbReference type="EC" id="3.2.2.22"/>
<dbReference type="EMBL" id="D10227">
    <property type="protein sequence ID" value="BAA01079.1"/>
    <property type="molecule type" value="mRNA"/>
</dbReference>
<dbReference type="EMBL" id="D10569">
    <property type="protein sequence ID" value="BAA01425.1"/>
    <property type="molecule type" value="Genomic_DNA"/>
</dbReference>
<dbReference type="PIR" id="S35539">
    <property type="entry name" value="A39817"/>
</dbReference>
<dbReference type="SMR" id="P21326"/>
<dbReference type="GO" id="GO:0030598">
    <property type="term" value="F:rRNA N-glycosylase activity"/>
    <property type="evidence" value="ECO:0007669"/>
    <property type="project" value="UniProtKB-EC"/>
</dbReference>
<dbReference type="GO" id="GO:0090729">
    <property type="term" value="F:toxin activity"/>
    <property type="evidence" value="ECO:0007669"/>
    <property type="project" value="UniProtKB-KW"/>
</dbReference>
<dbReference type="GO" id="GO:0051607">
    <property type="term" value="P:defense response to virus"/>
    <property type="evidence" value="ECO:0007669"/>
    <property type="project" value="UniProtKB-KW"/>
</dbReference>
<dbReference type="GO" id="GO:0017148">
    <property type="term" value="P:negative regulation of translation"/>
    <property type="evidence" value="ECO:0007669"/>
    <property type="project" value="UniProtKB-KW"/>
</dbReference>
<dbReference type="Gene3D" id="3.40.420.10">
    <property type="entry name" value="Ricin (A subunit), domain 1"/>
    <property type="match status" value="1"/>
</dbReference>
<dbReference type="Gene3D" id="4.10.470.10">
    <property type="entry name" value="Ricin (A Subunit), domain 2"/>
    <property type="match status" value="1"/>
</dbReference>
<dbReference type="InterPro" id="IPR036041">
    <property type="entry name" value="Ribosome-inact_prot_sf"/>
</dbReference>
<dbReference type="InterPro" id="IPR017989">
    <property type="entry name" value="Ribosome_inactivat_1/2"/>
</dbReference>
<dbReference type="InterPro" id="IPR001574">
    <property type="entry name" value="Ribosome_inactivat_prot"/>
</dbReference>
<dbReference type="InterPro" id="IPR017988">
    <property type="entry name" value="Ribosome_inactivat_prot_CS"/>
</dbReference>
<dbReference type="InterPro" id="IPR016138">
    <property type="entry name" value="Ribosome_inactivat_prot_sub1"/>
</dbReference>
<dbReference type="InterPro" id="IPR016139">
    <property type="entry name" value="Ribosome_inactivat_prot_sub2"/>
</dbReference>
<dbReference type="PANTHER" id="PTHR33453">
    <property type="match status" value="1"/>
</dbReference>
<dbReference type="PANTHER" id="PTHR33453:SF34">
    <property type="entry name" value="RIBOSOME-INACTIVATING PROTEIN"/>
    <property type="match status" value="1"/>
</dbReference>
<dbReference type="Pfam" id="PF00161">
    <property type="entry name" value="RIP"/>
    <property type="match status" value="1"/>
</dbReference>
<dbReference type="PRINTS" id="PR00396">
    <property type="entry name" value="SHIGARICIN"/>
</dbReference>
<dbReference type="SUPFAM" id="SSF56371">
    <property type="entry name" value="Ribosome inactivating proteins (RIP)"/>
    <property type="match status" value="1"/>
</dbReference>
<dbReference type="PROSITE" id="PS00275">
    <property type="entry name" value="SHIGA_RICIN"/>
    <property type="match status" value="1"/>
</dbReference>
<evidence type="ECO:0000250" key="1"/>
<evidence type="ECO:0000269" key="2">
    <source>
    </source>
</evidence>
<evidence type="ECO:0000269" key="3">
    <source>
    </source>
</evidence>
<evidence type="ECO:0000305" key="4"/>
<proteinExistence type="evidence at protein level"/>
<sequence>MLTTTKVFFLLLTTWITWYAIVNPQSRAAPTLETIASLDLNNPTTYLSFITNIRTKVADKTEQCTIQKISKTFTQRYSYIDLIVSSTQKITLAIDMADLYVLGYSDIANNKGRAFFFKDVTEAVANNFFPGATGTNRIKLTFTGSYGDLEKNGGLRKDNPLGIFRLENSIVNIYGKAGDVKKQAKFFLLAIQMVSEAARFKYISDKIPSEKYEEVTVDEYMTALENNWAKLSTAVYNSKPSTTTATKCQLATSPVTISPWIFKTVEEIKLVMGLLKSS</sequence>
<protein>
    <recommendedName>
        <fullName>Antiviral protein MAP</fullName>
        <ecNumber>3.2.2.22</ecNumber>
    </recommendedName>
    <alternativeName>
        <fullName>MAP-S</fullName>
    </alternativeName>
    <alternativeName>
        <fullName>Ribosome-inactivating protein</fullName>
    </alternativeName>
    <alternativeName>
        <fullName>rRNA N-glycosidase</fullName>
    </alternativeName>
</protein>
<accession>P21326</accession>
<name>RIPP_MIRJA</name>
<feature type="signal peptide" evidence="2 3">
    <location>
        <begin position="1"/>
        <end position="28"/>
    </location>
</feature>
<feature type="chain" id="PRO_0000030778" description="Antiviral protein MAP">
    <location>
        <begin position="29"/>
        <end position="278"/>
    </location>
</feature>
<feature type="active site" evidence="1">
    <location>
        <position position="196"/>
    </location>
</feature>
<feature type="disulfide bond" evidence="2">
    <location>
        <begin position="64"/>
        <end position="248"/>
    </location>
</feature>
<feature type="sequence conflict" description="In Ref. 1; BAA01079." evidence="4" ref="1">
    <original>I</original>
    <variation>L</variation>
    <location>
        <position position="35"/>
    </location>
</feature>
<feature type="sequence conflict" description="In Ref. 1; BAA01079." evidence="4" ref="1">
    <original>A</original>
    <variation>V</variation>
    <location>
        <position position="58"/>
    </location>
</feature>
<feature type="sequence conflict" description="In Ref. 4; AA sequence." evidence="4" ref="4">
    <original>E</original>
    <variation>L</variation>
    <location>
        <position position="62"/>
    </location>
</feature>
<feature type="sequence conflict" description="In Ref. 1; BAA01079." evidence="4" ref="1">
    <original>V</original>
    <variation>C</variation>
    <location>
        <position position="180"/>
    </location>
</feature>
<feature type="sequence conflict" description="In Ref. 4; AA sequence." evidence="4" ref="4">
    <original>L</original>
    <variation>I</variation>
    <location>
        <position position="189"/>
    </location>
</feature>
<feature type="sequence conflict" description="In Ref. 4; AA sequence." evidence="4" ref="4">
    <original>E</original>
    <variation>D</variation>
    <location>
        <position position="213"/>
    </location>
</feature>
<feature type="sequence conflict" description="In Ref. 1; BAA01079." evidence="4" ref="1">
    <original>D</original>
    <variation>G</variation>
    <location>
        <position position="218"/>
    </location>
</feature>
<feature type="sequence conflict" description="In Ref. 4; AA sequence." evidence="4" ref="4">
    <original>E</original>
    <variation>D</variation>
    <location>
        <position position="219"/>
    </location>
</feature>
<comment type="function">
    <text>Inhibits viral infection of plants, and protein synthesis in vitro.</text>
</comment>
<comment type="catalytic activity">
    <reaction>
        <text>Endohydrolysis of the N-glycosidic bond at one specific adenosine on the 28S rRNA.</text>
        <dbReference type="EC" id="3.2.2.22"/>
    </reaction>
</comment>
<comment type="mass spectrometry"/>
<comment type="similarity">
    <text evidence="4">Belongs to the ribosome-inactivating protein family. Type 1 RIP subfamily.</text>
</comment>